<comment type="function">
    <text evidence="1">Binds the 23S rRNA.</text>
</comment>
<comment type="cofactor">
    <cofactor evidence="1">
        <name>Zn(2+)</name>
        <dbReference type="ChEBI" id="CHEBI:29105"/>
    </cofactor>
    <text evidence="1">Binds 1 zinc ion per subunit.</text>
</comment>
<comment type="subunit">
    <text evidence="1">Part of the 50S ribosomal subunit.</text>
</comment>
<comment type="similarity">
    <text evidence="1">Belongs to the bacterial ribosomal protein bL31 family. Type A subfamily.</text>
</comment>
<gene>
    <name evidence="1" type="primary">rpmE</name>
    <name type="ordered locus">DP2727</name>
</gene>
<evidence type="ECO:0000255" key="1">
    <source>
        <dbReference type="HAMAP-Rule" id="MF_00501"/>
    </source>
</evidence>
<evidence type="ECO:0000305" key="2"/>
<feature type="chain" id="PRO_0000173100" description="Large ribosomal subunit protein bL31">
    <location>
        <begin position="1"/>
        <end position="73"/>
    </location>
</feature>
<feature type="binding site" evidence="1">
    <location>
        <position position="16"/>
    </location>
    <ligand>
        <name>Zn(2+)</name>
        <dbReference type="ChEBI" id="CHEBI:29105"/>
    </ligand>
</feature>
<feature type="binding site" evidence="1">
    <location>
        <position position="18"/>
    </location>
    <ligand>
        <name>Zn(2+)</name>
        <dbReference type="ChEBI" id="CHEBI:29105"/>
    </ligand>
</feature>
<feature type="binding site" evidence="1">
    <location>
        <position position="36"/>
    </location>
    <ligand>
        <name>Zn(2+)</name>
        <dbReference type="ChEBI" id="CHEBI:29105"/>
    </ligand>
</feature>
<feature type="binding site" evidence="1">
    <location>
        <position position="39"/>
    </location>
    <ligand>
        <name>Zn(2+)</name>
        <dbReference type="ChEBI" id="CHEBI:29105"/>
    </ligand>
</feature>
<sequence>MRKDIHPEYHKINAVCACGNEVELGSVETEMKVEICSACHPFFTGKQKLIDTAGRIEKFKQRYAKHFEKKAEA</sequence>
<name>RL31_DESPS</name>
<organism>
    <name type="scientific">Desulfotalea psychrophila (strain LSv54 / DSM 12343)</name>
    <dbReference type="NCBI Taxonomy" id="177439"/>
    <lineage>
        <taxon>Bacteria</taxon>
        <taxon>Pseudomonadati</taxon>
        <taxon>Thermodesulfobacteriota</taxon>
        <taxon>Desulfobulbia</taxon>
        <taxon>Desulfobulbales</taxon>
        <taxon>Desulfocapsaceae</taxon>
        <taxon>Desulfotalea</taxon>
    </lineage>
</organism>
<proteinExistence type="inferred from homology"/>
<dbReference type="EMBL" id="CR522870">
    <property type="protein sequence ID" value="CAG37456.1"/>
    <property type="molecule type" value="Genomic_DNA"/>
</dbReference>
<dbReference type="RefSeq" id="WP_011189968.1">
    <property type="nucleotide sequence ID" value="NC_006138.1"/>
</dbReference>
<dbReference type="STRING" id="177439.DP2727"/>
<dbReference type="KEGG" id="dps:DP2727"/>
<dbReference type="eggNOG" id="COG0254">
    <property type="taxonomic scope" value="Bacteria"/>
</dbReference>
<dbReference type="HOGENOM" id="CLU_114306_4_3_7"/>
<dbReference type="OrthoDB" id="9803251at2"/>
<dbReference type="Proteomes" id="UP000000602">
    <property type="component" value="Chromosome"/>
</dbReference>
<dbReference type="GO" id="GO:1990904">
    <property type="term" value="C:ribonucleoprotein complex"/>
    <property type="evidence" value="ECO:0007669"/>
    <property type="project" value="UniProtKB-KW"/>
</dbReference>
<dbReference type="GO" id="GO:0005840">
    <property type="term" value="C:ribosome"/>
    <property type="evidence" value="ECO:0007669"/>
    <property type="project" value="UniProtKB-KW"/>
</dbReference>
<dbReference type="GO" id="GO:0046872">
    <property type="term" value="F:metal ion binding"/>
    <property type="evidence" value="ECO:0007669"/>
    <property type="project" value="UniProtKB-KW"/>
</dbReference>
<dbReference type="GO" id="GO:0019843">
    <property type="term" value="F:rRNA binding"/>
    <property type="evidence" value="ECO:0007669"/>
    <property type="project" value="UniProtKB-KW"/>
</dbReference>
<dbReference type="GO" id="GO:0003735">
    <property type="term" value="F:structural constituent of ribosome"/>
    <property type="evidence" value="ECO:0007669"/>
    <property type="project" value="InterPro"/>
</dbReference>
<dbReference type="GO" id="GO:0006412">
    <property type="term" value="P:translation"/>
    <property type="evidence" value="ECO:0007669"/>
    <property type="project" value="UniProtKB-UniRule"/>
</dbReference>
<dbReference type="Gene3D" id="4.10.830.30">
    <property type="entry name" value="Ribosomal protein L31"/>
    <property type="match status" value="1"/>
</dbReference>
<dbReference type="HAMAP" id="MF_00501">
    <property type="entry name" value="Ribosomal_bL31_1"/>
    <property type="match status" value="1"/>
</dbReference>
<dbReference type="InterPro" id="IPR034704">
    <property type="entry name" value="Ribosomal_bL28/bL31-like_sf"/>
</dbReference>
<dbReference type="InterPro" id="IPR002150">
    <property type="entry name" value="Ribosomal_bL31"/>
</dbReference>
<dbReference type="InterPro" id="IPR027491">
    <property type="entry name" value="Ribosomal_bL31_A"/>
</dbReference>
<dbReference type="InterPro" id="IPR042105">
    <property type="entry name" value="Ribosomal_bL31_sf"/>
</dbReference>
<dbReference type="NCBIfam" id="TIGR00105">
    <property type="entry name" value="L31"/>
    <property type="match status" value="1"/>
</dbReference>
<dbReference type="NCBIfam" id="NF000612">
    <property type="entry name" value="PRK00019.1"/>
    <property type="match status" value="1"/>
</dbReference>
<dbReference type="NCBIfam" id="NF001809">
    <property type="entry name" value="PRK00528.1"/>
    <property type="match status" value="1"/>
</dbReference>
<dbReference type="PANTHER" id="PTHR33280">
    <property type="entry name" value="50S RIBOSOMAL PROTEIN L31, CHLOROPLASTIC"/>
    <property type="match status" value="1"/>
</dbReference>
<dbReference type="PANTHER" id="PTHR33280:SF6">
    <property type="entry name" value="LARGE RIBOSOMAL SUBUNIT PROTEIN BL31A"/>
    <property type="match status" value="1"/>
</dbReference>
<dbReference type="Pfam" id="PF01197">
    <property type="entry name" value="Ribosomal_L31"/>
    <property type="match status" value="1"/>
</dbReference>
<dbReference type="PRINTS" id="PR01249">
    <property type="entry name" value="RIBOSOMALL31"/>
</dbReference>
<dbReference type="SUPFAM" id="SSF143800">
    <property type="entry name" value="L28p-like"/>
    <property type="match status" value="1"/>
</dbReference>
<dbReference type="PROSITE" id="PS01143">
    <property type="entry name" value="RIBOSOMAL_L31"/>
    <property type="match status" value="1"/>
</dbReference>
<accession>Q6AJM4</accession>
<keyword id="KW-0479">Metal-binding</keyword>
<keyword id="KW-1185">Reference proteome</keyword>
<keyword id="KW-0687">Ribonucleoprotein</keyword>
<keyword id="KW-0689">Ribosomal protein</keyword>
<keyword id="KW-0694">RNA-binding</keyword>
<keyword id="KW-0699">rRNA-binding</keyword>
<keyword id="KW-0862">Zinc</keyword>
<reference key="1">
    <citation type="journal article" date="2004" name="Environ. Microbiol.">
        <title>The genome of Desulfotalea psychrophila, a sulfate-reducing bacterium from permanently cold Arctic sediments.</title>
        <authorList>
            <person name="Rabus R."/>
            <person name="Ruepp A."/>
            <person name="Frickey T."/>
            <person name="Rattei T."/>
            <person name="Fartmann B."/>
            <person name="Stark M."/>
            <person name="Bauer M."/>
            <person name="Zibat A."/>
            <person name="Lombardot T."/>
            <person name="Becker I."/>
            <person name="Amann J."/>
            <person name="Gellner K."/>
            <person name="Teeling H."/>
            <person name="Leuschner W.D."/>
            <person name="Gloeckner F.-O."/>
            <person name="Lupas A.N."/>
            <person name="Amann R."/>
            <person name="Klenk H.-P."/>
        </authorList>
    </citation>
    <scope>NUCLEOTIDE SEQUENCE [LARGE SCALE GENOMIC DNA]</scope>
    <source>
        <strain>DSM 12343 / LSv54</strain>
    </source>
</reference>
<protein>
    <recommendedName>
        <fullName evidence="1">Large ribosomal subunit protein bL31</fullName>
    </recommendedName>
    <alternativeName>
        <fullName evidence="2">50S ribosomal protein L31</fullName>
    </alternativeName>
</protein>